<accession>Q9BZP3</accession>
<accession>Q9BZP2</accession>
<accession>Q9BZP4</accession>
<evidence type="ECO:0000269" key="1">
    <source>
    </source>
</evidence>
<evidence type="ECO:0000303" key="2">
    <source>
    </source>
</evidence>
<evidence type="ECO:0000305" key="3"/>
<comment type="alternative products">
    <event type="alternative splicing"/>
    <isoform>
        <id>Q9BZP3-1</id>
        <name>1</name>
        <sequence type="displayed"/>
    </isoform>
    <isoform>
        <id>Q9BZP3-2</id>
        <name>2</name>
        <sequence type="described" ref="VSP_032988"/>
    </isoform>
    <isoform>
        <id>Q9BZP3-3</id>
        <name>3</name>
        <sequence type="described" ref="VSP_032987 VSP_032989"/>
    </isoform>
</comment>
<comment type="tissue specificity">
    <text evidence="1">Retina-specific.</text>
</comment>
<comment type="caution">
    <text evidence="3">Product of a dubious CDS prediction. May be a non-coding RNA.</text>
</comment>
<dbReference type="EMBL" id="AF295726">
    <property type="protein sequence ID" value="AAK13319.1"/>
    <property type="molecule type" value="mRNA"/>
</dbReference>
<dbReference type="EMBL" id="AF295728">
    <property type="protein sequence ID" value="AAK13320.1"/>
    <property type="molecule type" value="mRNA"/>
</dbReference>
<dbReference type="EMBL" id="AF295729">
    <property type="protein sequence ID" value="AAK13321.1"/>
    <property type="molecule type" value="mRNA"/>
</dbReference>
<dbReference type="EMBL" id="CH471113">
    <property type="protein sequence ID" value="EAX01703.1"/>
    <property type="molecule type" value="Genomic_DNA"/>
</dbReference>
<dbReference type="EMBL" id="CH471113">
    <property type="protein sequence ID" value="EAX01704.1"/>
    <property type="molecule type" value="Genomic_DNA"/>
</dbReference>
<dbReference type="BioMuta" id="HGNC:1225"/>
<dbReference type="MassIVE" id="Q9BZP3"/>
<dbReference type="AGR" id="HGNC:1225"/>
<dbReference type="GeneCards" id="LINC00470"/>
<dbReference type="HGNC" id="HGNC:1225">
    <property type="gene designation" value="LINC00470"/>
</dbReference>
<dbReference type="neXtProt" id="NX_Q9BZP3"/>
<dbReference type="InParanoid" id="Q9BZP3"/>
<dbReference type="PAN-GO" id="Q9BZP3">
    <property type="GO annotations" value="0 GO annotations based on evolutionary models"/>
</dbReference>
<dbReference type="PathwayCommons" id="Q9BZP3"/>
<dbReference type="ChiTaRS" id="LINC00470">
    <property type="organism name" value="human"/>
</dbReference>
<dbReference type="Pharos" id="Q9BZP3">
    <property type="development level" value="Tdark"/>
</dbReference>
<dbReference type="Proteomes" id="UP000005640">
    <property type="component" value="Unplaced"/>
</dbReference>
<dbReference type="RNAct" id="Q9BZP3">
    <property type="molecule type" value="protein"/>
</dbReference>
<keyword id="KW-0025">Alternative splicing</keyword>
<keyword id="KW-1185">Reference proteome</keyword>
<gene>
    <name type="primary">LINC00470</name>
    <name type="synonym">C18orf2</name>
</gene>
<reference key="1">
    <citation type="journal article" date="2000" name="Cytogenet. Cell Genet.">
        <title>EST mining of the UniGene dataset to identify retina-specific genes.</title>
        <authorList>
            <person name="Stoehr H."/>
            <person name="Mah N."/>
            <person name="Schulz H.L."/>
            <person name="Gehrig A."/>
            <person name="Froehlich S."/>
            <person name="Weber B.H.F."/>
        </authorList>
    </citation>
    <scope>NUCLEOTIDE SEQUENCE [MRNA] (ISOFORMS 1; 2 AND 3)</scope>
    <scope>TISSUE SPECIFICITY</scope>
    <source>
        <tissue>Retina</tissue>
    </source>
</reference>
<reference key="2">
    <citation type="submission" date="2005-09" db="EMBL/GenBank/DDBJ databases">
        <authorList>
            <person name="Mural R.J."/>
            <person name="Istrail S."/>
            <person name="Sutton G.G."/>
            <person name="Florea L."/>
            <person name="Halpern A.L."/>
            <person name="Mobarry C.M."/>
            <person name="Lippert R."/>
            <person name="Walenz B."/>
            <person name="Shatkay H."/>
            <person name="Dew I."/>
            <person name="Miller J.R."/>
            <person name="Flanigan M.J."/>
            <person name="Edwards N.J."/>
            <person name="Bolanos R."/>
            <person name="Fasulo D."/>
            <person name="Halldorsson B.V."/>
            <person name="Hannenhalli S."/>
            <person name="Turner R."/>
            <person name="Yooseph S."/>
            <person name="Lu F."/>
            <person name="Nusskern D.R."/>
            <person name="Shue B.C."/>
            <person name="Zheng X.H."/>
            <person name="Zhong F."/>
            <person name="Delcher A.L."/>
            <person name="Huson D.H."/>
            <person name="Kravitz S.A."/>
            <person name="Mouchard L."/>
            <person name="Reinert K."/>
            <person name="Remington K.A."/>
            <person name="Clark A.G."/>
            <person name="Waterman M.S."/>
            <person name="Eichler E.E."/>
            <person name="Adams M.D."/>
            <person name="Hunkapiller M.W."/>
            <person name="Myers E.W."/>
            <person name="Venter J.C."/>
        </authorList>
    </citation>
    <scope>NUCLEOTIDE SEQUENCE [LARGE SCALE GENOMIC DNA]</scope>
</reference>
<name>CR002_HUMAN</name>
<proteinExistence type="uncertain"/>
<feature type="chain" id="PRO_0000329448" description="Putative uncharacterized protein encoded by LINC00470">
    <location>
        <begin position="1"/>
        <end position="86"/>
    </location>
</feature>
<feature type="splice variant" id="VSP_032987" description="In isoform 3." evidence="2">
    <original>MVRHPYSVQTQLSTEAKAIWRSM</original>
    <variation>MQCLYFILILKGYFHQQHHTLLITIALCFLQ</variation>
    <location>
        <begin position="1"/>
        <end position="23"/>
    </location>
</feature>
<feature type="splice variant" id="VSP_032988" description="In isoform 2." evidence="2">
    <location>
        <begin position="1"/>
        <end position="22"/>
    </location>
</feature>
<feature type="splice variant" id="VSP_032989" description="In isoform 3." evidence="2">
    <original>CNCPIIGEIVISCYWLFEIPPLISE</original>
    <variation>ETQKCIQKPLHEK</variation>
    <location>
        <begin position="62"/>
        <end position="86"/>
    </location>
</feature>
<protein>
    <recommendedName>
        <fullName>Putative uncharacterized protein encoded by LINC00470</fullName>
    </recommendedName>
</protein>
<organism>
    <name type="scientific">Homo sapiens</name>
    <name type="common">Human</name>
    <dbReference type="NCBI Taxonomy" id="9606"/>
    <lineage>
        <taxon>Eukaryota</taxon>
        <taxon>Metazoa</taxon>
        <taxon>Chordata</taxon>
        <taxon>Craniata</taxon>
        <taxon>Vertebrata</taxon>
        <taxon>Euteleostomi</taxon>
        <taxon>Mammalia</taxon>
        <taxon>Eutheria</taxon>
        <taxon>Euarchontoglires</taxon>
        <taxon>Primates</taxon>
        <taxon>Haplorrhini</taxon>
        <taxon>Catarrhini</taxon>
        <taxon>Hominidae</taxon>
        <taxon>Homo</taxon>
    </lineage>
</organism>
<sequence>MVRHPYSVQTQLSTEAKAIWRSMQQQETNLLANLTTNDARDNSKDFQNSKVGAAATSRDEGCNCPIIGEIVISCYWLFEIPPLISE</sequence>